<evidence type="ECO:0000250" key="1"/>
<evidence type="ECO:0000255" key="2"/>
<evidence type="ECO:0000305" key="3"/>
<sequence length="511" mass="58192">MNQILIQGVIIIISLLSIIIINQKDIILINIKNKYIKQISLLLIIYFIYIGIYINYLFNNNILGFQLINNYININWGIDGISLWLINLTLILLPISLISNWNISKNEDKSKVLTYVLLILIIGIIIILNFICLDLITFYILFEATLLPLFILIGKLGSLPYNGNNKIIIKGINNNNITPREKAAYYIFIYTLFSSLFMLLSIGIYIYMINNIDYNNIYNIILSIDLQSIIFIGLIIGILVKTPVFPVHTWLPLVHAESPISGSIILAGIIIKLAIYAIIRLILINLSDVIIIYNPLIYTIGILTIFYIGLITLKQIDIKVIIAYSSIIHMAIAIMSIFSNNILGIEGSLLISIAHGFASPALFLLVGGILYDRYHSRLIYYYQSLATYMPIFSIYLLIAGLFNMGIPLSLNFIGEFLSLNGIFIYNSLFAILSTFSLFITTIYQMKLTTKLLYGYKSIYINIWSIWGNDVNKRELLLLNILFFFIILFGIYPNLIIKSLNLSISSLLYIPF</sequence>
<name>NU4M_WICCA</name>
<protein>
    <recommendedName>
        <fullName>NADH-ubiquinone oxidoreductase chain 4</fullName>
        <ecNumber>7.1.1.2</ecNumber>
    </recommendedName>
    <alternativeName>
        <fullName>NADH dehydrogenase subunit 4</fullName>
    </alternativeName>
</protein>
<reference key="1">
    <citation type="journal article" date="1995" name="Curr. Genet.">
        <title>The complete mitochondrial DNA sequence of Hansenula wingei reveals new characteristics of yeast mitochondria.</title>
        <authorList>
            <person name="Sekito T."/>
            <person name="Okamoto K."/>
            <person name="Kitano H."/>
            <person name="Yoshida K."/>
        </authorList>
    </citation>
    <scope>NUCLEOTIDE SEQUENCE [LARGE SCALE GENOMIC DNA]</scope>
    <source>
        <strain>21</strain>
    </source>
</reference>
<comment type="function">
    <text evidence="1">Core subunit of the mitochondrial membrane respiratory chain NADH dehydrogenase (Complex I) that is believed to belong to the minimal assembly required for catalysis. Complex I functions in the transfer of electrons from NADH to the respiratory chain. The immediate electron acceptor for the enzyme is believed to be ubiquinone (By similarity).</text>
</comment>
<comment type="catalytic activity">
    <reaction>
        <text>a ubiquinone + NADH + 5 H(+)(in) = a ubiquinol + NAD(+) + 4 H(+)(out)</text>
        <dbReference type="Rhea" id="RHEA:29091"/>
        <dbReference type="Rhea" id="RHEA-COMP:9565"/>
        <dbReference type="Rhea" id="RHEA-COMP:9566"/>
        <dbReference type="ChEBI" id="CHEBI:15378"/>
        <dbReference type="ChEBI" id="CHEBI:16389"/>
        <dbReference type="ChEBI" id="CHEBI:17976"/>
        <dbReference type="ChEBI" id="CHEBI:57540"/>
        <dbReference type="ChEBI" id="CHEBI:57945"/>
        <dbReference type="EC" id="7.1.1.2"/>
    </reaction>
</comment>
<comment type="subcellular location">
    <subcellularLocation>
        <location evidence="1">Mitochondrion membrane</location>
        <topology evidence="1">Multi-pass membrane protein</topology>
    </subcellularLocation>
</comment>
<comment type="similarity">
    <text evidence="3">Belongs to the complex I subunit 4 family.</text>
</comment>
<keyword id="KW-0249">Electron transport</keyword>
<keyword id="KW-0472">Membrane</keyword>
<keyword id="KW-0496">Mitochondrion</keyword>
<keyword id="KW-0520">NAD</keyword>
<keyword id="KW-0679">Respiratory chain</keyword>
<keyword id="KW-1278">Translocase</keyword>
<keyword id="KW-0812">Transmembrane</keyword>
<keyword id="KW-1133">Transmembrane helix</keyword>
<keyword id="KW-0813">Transport</keyword>
<keyword id="KW-0830">Ubiquinone</keyword>
<dbReference type="EC" id="7.1.1.2"/>
<dbReference type="EMBL" id="D31785">
    <property type="protein sequence ID" value="BAA06575.2"/>
    <property type="molecule type" value="Genomic_DNA"/>
</dbReference>
<dbReference type="PIR" id="S58752">
    <property type="entry name" value="S58752"/>
</dbReference>
<dbReference type="RefSeq" id="NP_038220.1">
    <property type="nucleotide sequence ID" value="NC_001762.1"/>
</dbReference>
<dbReference type="SMR" id="P48917"/>
<dbReference type="GeneID" id="800541"/>
<dbReference type="GO" id="GO:0031966">
    <property type="term" value="C:mitochondrial membrane"/>
    <property type="evidence" value="ECO:0007669"/>
    <property type="project" value="UniProtKB-SubCell"/>
</dbReference>
<dbReference type="GO" id="GO:0008137">
    <property type="term" value="F:NADH dehydrogenase (ubiquinone) activity"/>
    <property type="evidence" value="ECO:0007669"/>
    <property type="project" value="UniProtKB-EC"/>
</dbReference>
<dbReference type="GO" id="GO:0048039">
    <property type="term" value="F:ubiquinone binding"/>
    <property type="evidence" value="ECO:0007669"/>
    <property type="project" value="TreeGrafter"/>
</dbReference>
<dbReference type="GO" id="GO:0042773">
    <property type="term" value="P:ATP synthesis coupled electron transport"/>
    <property type="evidence" value="ECO:0007669"/>
    <property type="project" value="InterPro"/>
</dbReference>
<dbReference type="GO" id="GO:0015990">
    <property type="term" value="P:electron transport coupled proton transport"/>
    <property type="evidence" value="ECO:0007669"/>
    <property type="project" value="TreeGrafter"/>
</dbReference>
<dbReference type="InterPro" id="IPR010227">
    <property type="entry name" value="NADH_Q_OxRdtase_chainM/4"/>
</dbReference>
<dbReference type="InterPro" id="IPR003918">
    <property type="entry name" value="NADH_UbQ_OxRdtase"/>
</dbReference>
<dbReference type="InterPro" id="IPR001750">
    <property type="entry name" value="ND/Mrp_TM"/>
</dbReference>
<dbReference type="NCBIfam" id="TIGR01972">
    <property type="entry name" value="NDH_I_M"/>
    <property type="match status" value="1"/>
</dbReference>
<dbReference type="PANTHER" id="PTHR43507">
    <property type="entry name" value="NADH-UBIQUINONE OXIDOREDUCTASE CHAIN 4"/>
    <property type="match status" value="1"/>
</dbReference>
<dbReference type="PANTHER" id="PTHR43507:SF1">
    <property type="entry name" value="NADH-UBIQUINONE OXIDOREDUCTASE CHAIN 4"/>
    <property type="match status" value="1"/>
</dbReference>
<dbReference type="Pfam" id="PF00361">
    <property type="entry name" value="Proton_antipo_M"/>
    <property type="match status" value="1"/>
</dbReference>
<dbReference type="PRINTS" id="PR01437">
    <property type="entry name" value="NUOXDRDTASE4"/>
</dbReference>
<geneLocation type="mitochondrion"/>
<proteinExistence type="inferred from homology"/>
<accession>P48917</accession>
<organism>
    <name type="scientific">Wickerhamomyces canadensis</name>
    <name type="common">Yeast</name>
    <name type="synonym">Pichia canadensis</name>
    <dbReference type="NCBI Taxonomy" id="1156965"/>
    <lineage>
        <taxon>Eukaryota</taxon>
        <taxon>Fungi</taxon>
        <taxon>Dikarya</taxon>
        <taxon>Ascomycota</taxon>
        <taxon>Saccharomycotina</taxon>
        <taxon>Saccharomycetes</taxon>
        <taxon>Phaffomycetales</taxon>
        <taxon>Wickerhamomycetaceae</taxon>
        <taxon>Wickerhamomyces</taxon>
    </lineage>
</organism>
<feature type="chain" id="PRO_0000117939" description="NADH-ubiquinone oxidoreductase chain 4">
    <location>
        <begin position="1"/>
        <end position="511"/>
    </location>
</feature>
<feature type="transmembrane region" description="Helical" evidence="2">
    <location>
        <begin position="1"/>
        <end position="21"/>
    </location>
</feature>
<feature type="transmembrane region" description="Helical" evidence="2">
    <location>
        <begin position="39"/>
        <end position="59"/>
    </location>
</feature>
<feature type="transmembrane region" description="Helical" evidence="2">
    <location>
        <begin position="78"/>
        <end position="98"/>
    </location>
</feature>
<feature type="transmembrane region" description="Helical" evidence="2">
    <location>
        <begin position="116"/>
        <end position="136"/>
    </location>
</feature>
<feature type="transmembrane region" description="Helical" evidence="2">
    <location>
        <begin position="137"/>
        <end position="157"/>
    </location>
</feature>
<feature type="transmembrane region" description="Helical" evidence="2">
    <location>
        <begin position="186"/>
        <end position="206"/>
    </location>
</feature>
<feature type="transmembrane region" description="Helical" evidence="2">
    <location>
        <begin position="220"/>
        <end position="240"/>
    </location>
</feature>
<feature type="transmembrane region" description="Helical" evidence="2">
    <location>
        <begin position="264"/>
        <end position="284"/>
    </location>
</feature>
<feature type="transmembrane region" description="Helical" evidence="2">
    <location>
        <begin position="289"/>
        <end position="309"/>
    </location>
</feature>
<feature type="transmembrane region" description="Helical" evidence="2">
    <location>
        <begin position="318"/>
        <end position="338"/>
    </location>
</feature>
<feature type="transmembrane region" description="Helical" evidence="2">
    <location>
        <begin position="349"/>
        <end position="369"/>
    </location>
</feature>
<feature type="transmembrane region" description="Helical" evidence="2">
    <location>
        <begin position="388"/>
        <end position="408"/>
    </location>
</feature>
<feature type="transmembrane region" description="Helical" evidence="2">
    <location>
        <begin position="422"/>
        <end position="442"/>
    </location>
</feature>
<feature type="transmembrane region" description="Helical" evidence="2">
    <location>
        <begin position="476"/>
        <end position="496"/>
    </location>
</feature>
<gene>
    <name type="primary">ND4</name>
</gene>